<gene>
    <name evidence="12" type="primary">TIFY10C</name>
    <name evidence="12" type="synonym">JAZ8</name>
    <name evidence="18" type="ordered locus">Os09g0439200</name>
    <name evidence="14" type="ordered locus">LOC_Os09g26780</name>
    <name evidence="17" type="ORF">OJ1344_B01.13</name>
    <name evidence="19" type="ORF">OsJ_29511</name>
    <name evidence="16" type="ORF">P0556H01.29</name>
</gene>
<proteinExistence type="evidence at protein level"/>
<organism>
    <name type="scientific">Oryza sativa subsp. japonica</name>
    <name type="common">Rice</name>
    <dbReference type="NCBI Taxonomy" id="39947"/>
    <lineage>
        <taxon>Eukaryota</taxon>
        <taxon>Viridiplantae</taxon>
        <taxon>Streptophyta</taxon>
        <taxon>Embryophyta</taxon>
        <taxon>Tracheophyta</taxon>
        <taxon>Spermatophyta</taxon>
        <taxon>Magnoliopsida</taxon>
        <taxon>Liliopsida</taxon>
        <taxon>Poales</taxon>
        <taxon>Poaceae</taxon>
        <taxon>BOP clade</taxon>
        <taxon>Oryzoideae</taxon>
        <taxon>Oryzeae</taxon>
        <taxon>Oryzinae</taxon>
        <taxon>Oryza</taxon>
        <taxon>Oryza sativa</taxon>
    </lineage>
</organism>
<name>TI10C_ORYSJ</name>
<reference key="1">
    <citation type="journal article" date="2005" name="Nature">
        <title>The map-based sequence of the rice genome.</title>
        <authorList>
            <consortium name="International rice genome sequencing project (IRGSP)"/>
        </authorList>
    </citation>
    <scope>NUCLEOTIDE SEQUENCE [LARGE SCALE GENOMIC DNA]</scope>
    <source>
        <strain>cv. Nipponbare</strain>
    </source>
</reference>
<reference key="2">
    <citation type="journal article" date="2008" name="Nucleic Acids Res.">
        <title>The rice annotation project database (RAP-DB): 2008 update.</title>
        <authorList>
            <consortium name="The rice annotation project (RAP)"/>
        </authorList>
    </citation>
    <scope>GENOME REANNOTATION</scope>
    <source>
        <strain>cv. Nipponbare</strain>
    </source>
</reference>
<reference key="3">
    <citation type="journal article" date="2013" name="Rice">
        <title>Improvement of the Oryza sativa Nipponbare reference genome using next generation sequence and optical map data.</title>
        <authorList>
            <person name="Kawahara Y."/>
            <person name="de la Bastide M."/>
            <person name="Hamilton J.P."/>
            <person name="Kanamori H."/>
            <person name="McCombie W.R."/>
            <person name="Ouyang S."/>
            <person name="Schwartz D.C."/>
            <person name="Tanaka T."/>
            <person name="Wu J."/>
            <person name="Zhou S."/>
            <person name="Childs K.L."/>
            <person name="Davidson R.M."/>
            <person name="Lin H."/>
            <person name="Quesada-Ocampo L."/>
            <person name="Vaillancourt B."/>
            <person name="Sakai H."/>
            <person name="Lee S.S."/>
            <person name="Kim J."/>
            <person name="Numa H."/>
            <person name="Itoh T."/>
            <person name="Buell C.R."/>
            <person name="Matsumoto T."/>
        </authorList>
    </citation>
    <scope>GENOME REANNOTATION</scope>
    <source>
        <strain>cv. Nipponbare</strain>
    </source>
</reference>
<reference key="4">
    <citation type="journal article" date="2005" name="PLoS Biol.">
        <title>The genomes of Oryza sativa: a history of duplications.</title>
        <authorList>
            <person name="Yu J."/>
            <person name="Wang J."/>
            <person name="Lin W."/>
            <person name="Li S."/>
            <person name="Li H."/>
            <person name="Zhou J."/>
            <person name="Ni P."/>
            <person name="Dong W."/>
            <person name="Hu S."/>
            <person name="Zeng C."/>
            <person name="Zhang J."/>
            <person name="Zhang Y."/>
            <person name="Li R."/>
            <person name="Xu Z."/>
            <person name="Li S."/>
            <person name="Li X."/>
            <person name="Zheng H."/>
            <person name="Cong L."/>
            <person name="Lin L."/>
            <person name="Yin J."/>
            <person name="Geng J."/>
            <person name="Li G."/>
            <person name="Shi J."/>
            <person name="Liu J."/>
            <person name="Lv H."/>
            <person name="Li J."/>
            <person name="Wang J."/>
            <person name="Deng Y."/>
            <person name="Ran L."/>
            <person name="Shi X."/>
            <person name="Wang X."/>
            <person name="Wu Q."/>
            <person name="Li C."/>
            <person name="Ren X."/>
            <person name="Wang J."/>
            <person name="Wang X."/>
            <person name="Li D."/>
            <person name="Liu D."/>
            <person name="Zhang X."/>
            <person name="Ji Z."/>
            <person name="Zhao W."/>
            <person name="Sun Y."/>
            <person name="Zhang Z."/>
            <person name="Bao J."/>
            <person name="Han Y."/>
            <person name="Dong L."/>
            <person name="Ji J."/>
            <person name="Chen P."/>
            <person name="Wu S."/>
            <person name="Liu J."/>
            <person name="Xiao Y."/>
            <person name="Bu D."/>
            <person name="Tan J."/>
            <person name="Yang L."/>
            <person name="Ye C."/>
            <person name="Zhang J."/>
            <person name="Xu J."/>
            <person name="Zhou Y."/>
            <person name="Yu Y."/>
            <person name="Zhang B."/>
            <person name="Zhuang S."/>
            <person name="Wei H."/>
            <person name="Liu B."/>
            <person name="Lei M."/>
            <person name="Yu H."/>
            <person name="Li Y."/>
            <person name="Xu H."/>
            <person name="Wei S."/>
            <person name="He X."/>
            <person name="Fang L."/>
            <person name="Zhang Z."/>
            <person name="Zhang Y."/>
            <person name="Huang X."/>
            <person name="Su Z."/>
            <person name="Tong W."/>
            <person name="Li J."/>
            <person name="Tong Z."/>
            <person name="Li S."/>
            <person name="Ye J."/>
            <person name="Wang L."/>
            <person name="Fang L."/>
            <person name="Lei T."/>
            <person name="Chen C.-S."/>
            <person name="Chen H.-C."/>
            <person name="Xu Z."/>
            <person name="Li H."/>
            <person name="Huang H."/>
            <person name="Zhang F."/>
            <person name="Xu H."/>
            <person name="Li N."/>
            <person name="Zhao C."/>
            <person name="Li S."/>
            <person name="Dong L."/>
            <person name="Huang Y."/>
            <person name="Li L."/>
            <person name="Xi Y."/>
            <person name="Qi Q."/>
            <person name="Li W."/>
            <person name="Zhang B."/>
            <person name="Hu W."/>
            <person name="Zhang Y."/>
            <person name="Tian X."/>
            <person name="Jiao Y."/>
            <person name="Liang X."/>
            <person name="Jin J."/>
            <person name="Gao L."/>
            <person name="Zheng W."/>
            <person name="Hao B."/>
            <person name="Liu S.-M."/>
            <person name="Wang W."/>
            <person name="Yuan L."/>
            <person name="Cao M."/>
            <person name="McDermott J."/>
            <person name="Samudrala R."/>
            <person name="Wang J."/>
            <person name="Wong G.K.-S."/>
            <person name="Yang H."/>
        </authorList>
    </citation>
    <scope>NUCLEOTIDE SEQUENCE [LARGE SCALE GENOMIC DNA]</scope>
    <source>
        <strain>cv. Nipponbare</strain>
    </source>
</reference>
<reference key="5">
    <citation type="journal article" date="2003" name="Science">
        <title>Collection, mapping, and annotation of over 28,000 cDNA clones from japonica rice.</title>
        <authorList>
            <consortium name="The rice full-length cDNA consortium"/>
        </authorList>
    </citation>
    <scope>NUCLEOTIDE SEQUENCE [LARGE SCALE MRNA]</scope>
    <source>
        <strain>cv. Nipponbare</strain>
    </source>
</reference>
<reference key="6">
    <citation type="journal article" date="2009" name="Plant Mol. Biol.">
        <title>Identification and expression profiling analysis of TIFY family genes involved in stress and phytohormone responses in rice.</title>
        <authorList>
            <person name="Ye H."/>
            <person name="Du H."/>
            <person name="Tang N."/>
            <person name="Li X."/>
            <person name="Xiong L."/>
        </authorList>
    </citation>
    <scope>GENE FAMILY</scope>
    <scope>NOMENCLATURE</scope>
    <scope>INDUCTION</scope>
</reference>
<reference key="7">
    <citation type="journal article" date="2011" name="Plant J.">
        <title>OsbHLH148, a basic helix-loop-helix protein, interacts with OsJAZ proteins in a jasmonate signaling pathway leading to drought tolerance in rice.</title>
        <authorList>
            <person name="Seo J.S."/>
            <person name="Joo J."/>
            <person name="Kim M.J."/>
            <person name="Kim Y.K."/>
            <person name="Nahm B.H."/>
            <person name="Song S.I."/>
            <person name="Cheong J.J."/>
            <person name="Lee J.S."/>
            <person name="Kim J.K."/>
            <person name="Choi Y.D."/>
        </authorList>
    </citation>
    <scope>INTERACTION WITH BHLH148</scope>
</reference>
<reference key="8">
    <citation type="journal article" date="2012" name="Plant Cell Physiol.">
        <title>Involvement of OsJAZ8 in jasmonate-induced resistance to bacterial blight in rice.</title>
        <authorList>
            <person name="Yamada S."/>
            <person name="Kano A."/>
            <person name="Tamaoki D."/>
            <person name="Miyamoto A."/>
            <person name="Shishido H."/>
            <person name="Miyoshi S."/>
            <person name="Taniguchi S."/>
            <person name="Akimitsu K."/>
            <person name="Gomi K."/>
        </authorList>
    </citation>
    <scope>FUNCTION</scope>
    <scope>INTERACTION WITH TIFY5/JAZ2; TIFY6B/JAZ4; TIFY9/JAZ5; TIFY11A; TIFY11D/JAZ12; TIFY11G/JAZ15; COI1B AND NINJA1</scope>
    <scope>SUBCELLULAR LOCATION</scope>
    <scope>PTM</scope>
</reference>
<reference key="9">
    <citation type="journal article" date="2013" name="PLoS ONE">
        <title>Oryza sativa COI homologues restore jasmonate signal transduction in Arabidopsis coi1-1 mutants.</title>
        <authorList>
            <person name="Lee H.Y."/>
            <person name="Seo J.S."/>
            <person name="Cho J.H."/>
            <person name="Jung H."/>
            <person name="Kim J.K."/>
            <person name="Lee J.S."/>
            <person name="Rhee S."/>
            <person name="Do Choi Y."/>
        </authorList>
    </citation>
    <scope>INTERACTION WITH COI1B</scope>
</reference>
<reference key="10">
    <citation type="journal article" date="2014" name="Plant Cell Environ.">
        <title>Jasmonate induction of the monoterpene linalool confers resistance to rice bacterial blight and its biosynthesis is regulated by JAZ protein in rice.</title>
        <authorList>
            <person name="Taniguchi S."/>
            <person name="Hosokawa-Shinonaga Y."/>
            <person name="Tamaoki D."/>
            <person name="Yamada S."/>
            <person name="Akimitsu K."/>
            <person name="Gomi K."/>
        </authorList>
    </citation>
    <scope>FUNCTION</scope>
</reference>
<reference key="11">
    <citation type="journal article" date="2014" name="Plant Cell Environ.">
        <title>Light induces jasmonate-isoleucine conjugation via OsJAR1-dependent and -independent pathways in rice.</title>
        <authorList>
            <person name="Svyatyna K."/>
            <person name="Jikumaru Y."/>
            <person name="Brendel R."/>
            <person name="Reichelt M."/>
            <person name="Mithoefer A."/>
            <person name="Takano M."/>
            <person name="Kamiya Y."/>
            <person name="Nick P."/>
            <person name="Riemann M."/>
        </authorList>
    </citation>
    <scope>INDUCTION</scope>
</reference>
<protein>
    <recommendedName>
        <fullName evidence="14">Protein TIFY 10c</fullName>
        <shortName evidence="12">OsTIFY10c</shortName>
    </recommendedName>
    <alternativeName>
        <fullName evidence="14">Jasmonate ZIM domain-containing protein 8</fullName>
        <shortName evidence="12">OsJAZ8</shortName>
    </alternativeName>
    <alternativeName>
        <fullName evidence="13">OsJAZ7</fullName>
    </alternativeName>
</protein>
<sequence length="232" mass="24053">MAGRATATATAAGKDRSSFAVTCSLLSQFLKEKKGGGGGLQGLGLGLRPAPAAPPAAGAGGAFRPPPTTMNLLSGLDAPAVEVEPNTAETAADELPLIKAPADQQSDESASEAAGEKAQQLTIFYGGKVVVFENFPSTKVKDLLQIVSTGDGVDKNTGTAATQSLPRPAHNSLPDLPIARRNSLHRFLEKRKGRMNANAPYQANCTAAPSKQANGDKSWLGFGQEMTIKQEI</sequence>
<keyword id="KW-0963">Cytoplasm</keyword>
<keyword id="KW-1184">Jasmonic acid signaling pathway</keyword>
<keyword id="KW-0539">Nucleus</keyword>
<keyword id="KW-0611">Plant defense</keyword>
<keyword id="KW-1185">Reference proteome</keyword>
<keyword id="KW-0804">Transcription</keyword>
<keyword id="KW-0805">Transcription regulation</keyword>
<keyword id="KW-0832">Ubl conjugation</keyword>
<comment type="function">
    <text evidence="8 10">Repressor of jasmonate (JA) responses. Acts as a repressor of JA-induced resistance to the bacterial blight pathogen Xanthomonas oryzae pv. oryzae (Xoo) (PubMed:23104764). Regulates JA-induced accumulation of linalool at the transcriptional level of linalool synthase gene LIS. Linalool is important for resistance to bacterial blight pathogen Xoo (PubMed:23889289).</text>
</comment>
<comment type="subunit">
    <text evidence="7 8 9">Interacts with BHLH148 (PubMed:21332845). Interacts with COI1B in a coronatine-dependent manner. Coronatine is an analog of jasmonoyl isoleucine (JA-Ile) (PubMed:23104764, PubMed:23320078). Interacts with TIFY5/JAZ2, TIFY6B/JAZ4, TIFY9/JAZ5, TIFY11A, TIFY11D/JAZ12, TIFY11G/JAZ15 and NINJA1 (PubMed:23104764).</text>
</comment>
<comment type="subcellular location">
    <subcellularLocation>
        <location evidence="4 8">Nucleus</location>
    </subcellularLocation>
    <subcellularLocation>
        <location evidence="8">Cytoplasm</location>
        <location evidence="8">Cytosol</location>
    </subcellularLocation>
    <text evidence="8">Mainly localized in the nucleus.</text>
</comment>
<comment type="induction">
    <text evidence="6 7 11">By jasmonate, and cold, drought and salt stresses. Down-regulated by abscisic acid (ABA) (PubMed:19618278). Induced by wounding (PubMed:21332845, PubMed:24033451). Induced by blue light (PubMed:24033451).</text>
</comment>
<comment type="domain">
    <text evidence="1">The jas domain (177-202) is required for interaction with COI1.</text>
</comment>
<comment type="PTM">
    <text evidence="8 15">Ubiquitinated (Probable). Increase in jasmonoyl isoleucine (JA-Ile) levels mediates its degradation via COI1B-mediated proteasome pathway (PubMed:23104764).</text>
</comment>
<comment type="miscellaneous">
    <text evidence="8">Plants over-expressing a truncated form of TIFY10C/JAZ8 display a jasmonate-insensitive phenotype and have altered expression of jasmonate-responsive genes.</text>
</comment>
<comment type="similarity">
    <text evidence="14">Belongs to the TIFY/JAZ family.</text>
</comment>
<evidence type="ECO:0000250" key="1">
    <source>
        <dbReference type="UniProtKB" id="Q7XPM8"/>
    </source>
</evidence>
<evidence type="ECO:0000255" key="2"/>
<evidence type="ECO:0000255" key="3">
    <source>
        <dbReference type="PROSITE-ProRule" id="PRU00650"/>
    </source>
</evidence>
<evidence type="ECO:0000255" key="4">
    <source>
        <dbReference type="PROSITE-ProRule" id="PRU00768"/>
    </source>
</evidence>
<evidence type="ECO:0000256" key="5">
    <source>
        <dbReference type="SAM" id="MobiDB-lite"/>
    </source>
</evidence>
<evidence type="ECO:0000269" key="6">
    <source>
    </source>
</evidence>
<evidence type="ECO:0000269" key="7">
    <source>
    </source>
</evidence>
<evidence type="ECO:0000269" key="8">
    <source>
    </source>
</evidence>
<evidence type="ECO:0000269" key="9">
    <source>
    </source>
</evidence>
<evidence type="ECO:0000269" key="10">
    <source>
    </source>
</evidence>
<evidence type="ECO:0000269" key="11">
    <source>
    </source>
</evidence>
<evidence type="ECO:0000303" key="12">
    <source>
    </source>
</evidence>
<evidence type="ECO:0000303" key="13">
    <source>
    </source>
</evidence>
<evidence type="ECO:0000305" key="14"/>
<evidence type="ECO:0000305" key="15">
    <source>
    </source>
</evidence>
<evidence type="ECO:0000312" key="16">
    <source>
        <dbReference type="EMBL" id="BAD36082.1"/>
    </source>
</evidence>
<evidence type="ECO:0000312" key="17">
    <source>
        <dbReference type="EMBL" id="BAD36140.1"/>
    </source>
</evidence>
<evidence type="ECO:0000312" key="18">
    <source>
        <dbReference type="EMBL" id="BAF25187.1"/>
    </source>
</evidence>
<evidence type="ECO:0000312" key="19">
    <source>
        <dbReference type="EMBL" id="EAZ44871.1"/>
    </source>
</evidence>
<accession>Q69P94</accession>
<accession>A0A0N7KQV5</accession>
<feature type="chain" id="PRO_0000434851" description="Protein TIFY 10c">
    <location>
        <begin position="1"/>
        <end position="232"/>
    </location>
</feature>
<feature type="domain" description="Tify" evidence="3">
    <location>
        <begin position="114"/>
        <end position="149"/>
    </location>
</feature>
<feature type="region of interest" description="Disordered" evidence="5">
    <location>
        <begin position="54"/>
        <end position="73"/>
    </location>
</feature>
<feature type="region of interest" description="Disordered" evidence="5">
    <location>
        <begin position="152"/>
        <end position="177"/>
    </location>
</feature>
<feature type="short sequence motif" description="Jas" evidence="2">
    <location>
        <begin position="177"/>
        <end position="202"/>
    </location>
</feature>
<feature type="short sequence motif" description="Nuclear localization signal" evidence="4">
    <location>
        <begin position="179"/>
        <end position="186"/>
    </location>
</feature>
<feature type="compositionally biased region" description="Polar residues" evidence="5">
    <location>
        <begin position="156"/>
        <end position="165"/>
    </location>
</feature>
<dbReference type="EMBL" id="AP005424">
    <property type="protein sequence ID" value="BAD36082.1"/>
    <property type="molecule type" value="Genomic_DNA"/>
</dbReference>
<dbReference type="EMBL" id="AP005570">
    <property type="protein sequence ID" value="BAD36140.1"/>
    <property type="molecule type" value="Genomic_DNA"/>
</dbReference>
<dbReference type="EMBL" id="AP008215">
    <property type="protein sequence ID" value="BAF25187.1"/>
    <property type="molecule type" value="Genomic_DNA"/>
</dbReference>
<dbReference type="EMBL" id="AP014965">
    <property type="protein sequence ID" value="BAT08274.1"/>
    <property type="molecule type" value="Genomic_DNA"/>
</dbReference>
<dbReference type="EMBL" id="CM000146">
    <property type="protein sequence ID" value="EAZ44871.1"/>
    <property type="molecule type" value="Genomic_DNA"/>
</dbReference>
<dbReference type="EMBL" id="AK108738">
    <property type="protein sequence ID" value="BAG98510.1"/>
    <property type="molecule type" value="mRNA"/>
</dbReference>
<dbReference type="RefSeq" id="XP_015610644.1">
    <property type="nucleotide sequence ID" value="XM_015755158.1"/>
</dbReference>
<dbReference type="SMR" id="Q69P94"/>
<dbReference type="FunCoup" id="Q69P94">
    <property type="interactions" value="4"/>
</dbReference>
<dbReference type="STRING" id="39947.Q69P94"/>
<dbReference type="PaxDb" id="39947-Q69P94"/>
<dbReference type="EnsemblPlants" id="Os09t0439200-01">
    <property type="protein sequence ID" value="Os09t0439200-01"/>
    <property type="gene ID" value="Os09g0439200"/>
</dbReference>
<dbReference type="Gramene" id="Os09t0439200-01">
    <property type="protein sequence ID" value="Os09t0439200-01"/>
    <property type="gene ID" value="Os09g0439200"/>
</dbReference>
<dbReference type="KEGG" id="dosa:Os09g0439200"/>
<dbReference type="eggNOG" id="ENOG502S6PU">
    <property type="taxonomic scope" value="Eukaryota"/>
</dbReference>
<dbReference type="HOGENOM" id="CLU_051749_1_1_1"/>
<dbReference type="InParanoid" id="Q69P94"/>
<dbReference type="OMA" id="EAKEHDQ"/>
<dbReference type="OrthoDB" id="1937734at2759"/>
<dbReference type="PlantReactome" id="R-OSA-5679411">
    <property type="pathway name" value="Gibberellin signaling"/>
</dbReference>
<dbReference type="PlantReactome" id="R-OSA-6787011">
    <property type="pathway name" value="Jasmonic acid signaling"/>
</dbReference>
<dbReference type="PlantReactome" id="R-OSA-6788019">
    <property type="pathway name" value="Salicylic acid signaling"/>
</dbReference>
<dbReference type="Proteomes" id="UP000000763">
    <property type="component" value="Chromosome 9"/>
</dbReference>
<dbReference type="Proteomes" id="UP000007752">
    <property type="component" value="Chromosome 9"/>
</dbReference>
<dbReference type="Proteomes" id="UP000059680">
    <property type="component" value="Chromosome 9"/>
</dbReference>
<dbReference type="GO" id="GO:0005829">
    <property type="term" value="C:cytosol"/>
    <property type="evidence" value="ECO:0007669"/>
    <property type="project" value="UniProtKB-SubCell"/>
</dbReference>
<dbReference type="GO" id="GO:0005634">
    <property type="term" value="C:nucleus"/>
    <property type="evidence" value="ECO:0000318"/>
    <property type="project" value="GO_Central"/>
</dbReference>
<dbReference type="GO" id="GO:0006952">
    <property type="term" value="P:defense response"/>
    <property type="evidence" value="ECO:0007669"/>
    <property type="project" value="UniProtKB-KW"/>
</dbReference>
<dbReference type="GO" id="GO:0031347">
    <property type="term" value="P:regulation of defense response"/>
    <property type="evidence" value="ECO:0000318"/>
    <property type="project" value="GO_Central"/>
</dbReference>
<dbReference type="GO" id="GO:2000022">
    <property type="term" value="P:regulation of jasmonic acid mediated signaling pathway"/>
    <property type="evidence" value="ECO:0000318"/>
    <property type="project" value="GO_Central"/>
</dbReference>
<dbReference type="GO" id="GO:0009611">
    <property type="term" value="P:response to wounding"/>
    <property type="evidence" value="ECO:0000318"/>
    <property type="project" value="GO_Central"/>
</dbReference>
<dbReference type="InterPro" id="IPR018467">
    <property type="entry name" value="CCT_CS"/>
</dbReference>
<dbReference type="InterPro" id="IPR040390">
    <property type="entry name" value="TIFY/JAZ"/>
</dbReference>
<dbReference type="InterPro" id="IPR010399">
    <property type="entry name" value="Tify_dom"/>
</dbReference>
<dbReference type="PANTHER" id="PTHR33077:SF50">
    <property type="entry name" value="PROTEIN TIFY 10C"/>
    <property type="match status" value="1"/>
</dbReference>
<dbReference type="PANTHER" id="PTHR33077">
    <property type="entry name" value="PROTEIN TIFY 4A-RELATED-RELATED"/>
    <property type="match status" value="1"/>
</dbReference>
<dbReference type="Pfam" id="PF09425">
    <property type="entry name" value="Jas_motif"/>
    <property type="match status" value="1"/>
</dbReference>
<dbReference type="Pfam" id="PF06200">
    <property type="entry name" value="tify"/>
    <property type="match status" value="1"/>
</dbReference>
<dbReference type="SMART" id="SM00979">
    <property type="entry name" value="TIFY"/>
    <property type="match status" value="1"/>
</dbReference>
<dbReference type="PROSITE" id="PS51320">
    <property type="entry name" value="TIFY"/>
    <property type="match status" value="1"/>
</dbReference>